<accession>Q5M334</accession>
<organism>
    <name type="scientific">Streptococcus thermophilus (strain ATCC BAA-250 / LMG 18311)</name>
    <dbReference type="NCBI Taxonomy" id="264199"/>
    <lineage>
        <taxon>Bacteria</taxon>
        <taxon>Bacillati</taxon>
        <taxon>Bacillota</taxon>
        <taxon>Bacilli</taxon>
        <taxon>Lactobacillales</taxon>
        <taxon>Streptococcaceae</taxon>
        <taxon>Streptococcus</taxon>
    </lineage>
</organism>
<protein>
    <recommendedName>
        <fullName evidence="1">Dihydroxy-acid dehydratase</fullName>
        <shortName evidence="1">DAD</shortName>
        <ecNumber evidence="1">4.2.1.9</ecNumber>
    </recommendedName>
</protein>
<dbReference type="EC" id="4.2.1.9" evidence="1"/>
<dbReference type="EMBL" id="CP000023">
    <property type="protein sequence ID" value="AAV61207.1"/>
    <property type="molecule type" value="Genomic_DNA"/>
</dbReference>
<dbReference type="SMR" id="Q5M334"/>
<dbReference type="STRING" id="264199.stu1604"/>
<dbReference type="KEGG" id="stl:stu1604"/>
<dbReference type="eggNOG" id="COG0129">
    <property type="taxonomic scope" value="Bacteria"/>
</dbReference>
<dbReference type="HOGENOM" id="CLU_014271_4_1_9"/>
<dbReference type="UniPathway" id="UPA00047">
    <property type="reaction ID" value="UER00057"/>
</dbReference>
<dbReference type="UniPathway" id="UPA00049">
    <property type="reaction ID" value="UER00061"/>
</dbReference>
<dbReference type="Proteomes" id="UP000001170">
    <property type="component" value="Chromosome"/>
</dbReference>
<dbReference type="GO" id="GO:0051537">
    <property type="term" value="F:2 iron, 2 sulfur cluster binding"/>
    <property type="evidence" value="ECO:0007669"/>
    <property type="project" value="UniProtKB-UniRule"/>
</dbReference>
<dbReference type="GO" id="GO:0004160">
    <property type="term" value="F:dihydroxy-acid dehydratase activity"/>
    <property type="evidence" value="ECO:0007669"/>
    <property type="project" value="UniProtKB-UniRule"/>
</dbReference>
<dbReference type="GO" id="GO:0000287">
    <property type="term" value="F:magnesium ion binding"/>
    <property type="evidence" value="ECO:0007669"/>
    <property type="project" value="UniProtKB-UniRule"/>
</dbReference>
<dbReference type="GO" id="GO:0009097">
    <property type="term" value="P:isoleucine biosynthetic process"/>
    <property type="evidence" value="ECO:0007669"/>
    <property type="project" value="UniProtKB-UniRule"/>
</dbReference>
<dbReference type="GO" id="GO:0009099">
    <property type="term" value="P:L-valine biosynthetic process"/>
    <property type="evidence" value="ECO:0007669"/>
    <property type="project" value="UniProtKB-UniRule"/>
</dbReference>
<dbReference type="FunFam" id="3.50.30.80:FF:000001">
    <property type="entry name" value="Dihydroxy-acid dehydratase"/>
    <property type="match status" value="1"/>
</dbReference>
<dbReference type="Gene3D" id="3.50.30.80">
    <property type="entry name" value="IlvD/EDD C-terminal domain-like"/>
    <property type="match status" value="1"/>
</dbReference>
<dbReference type="HAMAP" id="MF_00012">
    <property type="entry name" value="IlvD"/>
    <property type="match status" value="1"/>
</dbReference>
<dbReference type="InterPro" id="IPR050165">
    <property type="entry name" value="DHAD_IlvD/Edd"/>
</dbReference>
<dbReference type="InterPro" id="IPR042096">
    <property type="entry name" value="Dihydro-acid_dehy_C"/>
</dbReference>
<dbReference type="InterPro" id="IPR004404">
    <property type="entry name" value="DihydroxyA_deHydtase"/>
</dbReference>
<dbReference type="InterPro" id="IPR020558">
    <property type="entry name" value="DiOHA_6PGluconate_deHydtase_CS"/>
</dbReference>
<dbReference type="InterPro" id="IPR056740">
    <property type="entry name" value="ILV_EDD_C"/>
</dbReference>
<dbReference type="InterPro" id="IPR000581">
    <property type="entry name" value="ILV_EDD_N"/>
</dbReference>
<dbReference type="InterPro" id="IPR037237">
    <property type="entry name" value="IlvD/EDD_N"/>
</dbReference>
<dbReference type="NCBIfam" id="TIGR00110">
    <property type="entry name" value="ilvD"/>
    <property type="match status" value="1"/>
</dbReference>
<dbReference type="NCBIfam" id="NF002068">
    <property type="entry name" value="PRK00911.1"/>
    <property type="match status" value="1"/>
</dbReference>
<dbReference type="PANTHER" id="PTHR21000">
    <property type="entry name" value="DIHYDROXY-ACID DEHYDRATASE DAD"/>
    <property type="match status" value="1"/>
</dbReference>
<dbReference type="PANTHER" id="PTHR21000:SF5">
    <property type="entry name" value="DIHYDROXY-ACID DEHYDRATASE, MITOCHONDRIAL"/>
    <property type="match status" value="1"/>
</dbReference>
<dbReference type="Pfam" id="PF24877">
    <property type="entry name" value="ILV_EDD_C"/>
    <property type="match status" value="1"/>
</dbReference>
<dbReference type="Pfam" id="PF00920">
    <property type="entry name" value="ILVD_EDD_N"/>
    <property type="match status" value="1"/>
</dbReference>
<dbReference type="SUPFAM" id="SSF143975">
    <property type="entry name" value="IlvD/EDD N-terminal domain-like"/>
    <property type="match status" value="1"/>
</dbReference>
<dbReference type="SUPFAM" id="SSF52016">
    <property type="entry name" value="LeuD/IlvD-like"/>
    <property type="match status" value="1"/>
</dbReference>
<dbReference type="PROSITE" id="PS00886">
    <property type="entry name" value="ILVD_EDD_1"/>
    <property type="match status" value="1"/>
</dbReference>
<dbReference type="PROSITE" id="PS00887">
    <property type="entry name" value="ILVD_EDD_2"/>
    <property type="match status" value="1"/>
</dbReference>
<keyword id="KW-0001">2Fe-2S</keyword>
<keyword id="KW-0028">Amino-acid biosynthesis</keyword>
<keyword id="KW-0100">Branched-chain amino acid biosynthesis</keyword>
<keyword id="KW-0408">Iron</keyword>
<keyword id="KW-0411">Iron-sulfur</keyword>
<keyword id="KW-0456">Lyase</keyword>
<keyword id="KW-0460">Magnesium</keyword>
<keyword id="KW-0479">Metal-binding</keyword>
<keyword id="KW-1185">Reference proteome</keyword>
<feature type="chain" id="PRO_0000225428" description="Dihydroxy-acid dehydratase">
    <location>
        <begin position="1"/>
        <end position="572"/>
    </location>
</feature>
<feature type="active site" description="Proton acceptor" evidence="1">
    <location>
        <position position="479"/>
    </location>
</feature>
<feature type="binding site" evidence="1">
    <location>
        <position position="57"/>
    </location>
    <ligand>
        <name>[2Fe-2S] cluster</name>
        <dbReference type="ChEBI" id="CHEBI:190135"/>
    </ligand>
</feature>
<feature type="binding site" evidence="1">
    <location>
        <position position="89"/>
    </location>
    <ligand>
        <name>Mg(2+)</name>
        <dbReference type="ChEBI" id="CHEBI:18420"/>
    </ligand>
</feature>
<feature type="binding site" evidence="1">
    <location>
        <position position="130"/>
    </location>
    <ligand>
        <name>[2Fe-2S] cluster</name>
        <dbReference type="ChEBI" id="CHEBI:190135"/>
    </ligand>
</feature>
<feature type="binding site" evidence="1">
    <location>
        <position position="131"/>
    </location>
    <ligand>
        <name>Mg(2+)</name>
        <dbReference type="ChEBI" id="CHEBI:18420"/>
    </ligand>
</feature>
<feature type="binding site" description="via carbamate group" evidence="1">
    <location>
        <position position="132"/>
    </location>
    <ligand>
        <name>Mg(2+)</name>
        <dbReference type="ChEBI" id="CHEBI:18420"/>
    </ligand>
</feature>
<feature type="binding site" evidence="1">
    <location>
        <position position="202"/>
    </location>
    <ligand>
        <name>[2Fe-2S] cluster</name>
        <dbReference type="ChEBI" id="CHEBI:190135"/>
    </ligand>
</feature>
<feature type="binding site" evidence="1">
    <location>
        <position position="453"/>
    </location>
    <ligand>
        <name>Mg(2+)</name>
        <dbReference type="ChEBI" id="CHEBI:18420"/>
    </ligand>
</feature>
<feature type="modified residue" description="N6-carboxylysine" evidence="1">
    <location>
        <position position="132"/>
    </location>
</feature>
<proteinExistence type="inferred from homology"/>
<name>ILVD_STRT2</name>
<sequence>MEENIVSENNMKHRSSVYDSMVKSPNRAMLRATGMTDDSFEKPIVGVISTWAENTPCNIHLHGFGQIAKEGVKDAGAWPVQFGTITVADGIAMGTPGMRFSLTSRDIIADSIEAAMGGHNVDAFVAIGGCDKNMPGSMIAIANMDIPAIFAYGGTIAPGNLNGKDIDLVSVFEGIGKWNHGDMTAEEVKNLECNACPGPGGCGGMYTANTMATAIEVMGMSLPGSSSHPAESAEKKADIEEAGRAVVKMLEMGLKPSDILTREAFEDAITVTMALGGSTNATLHLLAIAHAANVDLTLEDFNDFQERVPHLADLKPSGQYVFQDLYNVGGVPAVMKYLLKNGFLHGDRITCTGKTVAENLEAFDDLTPGQKVIMPLENPKRADGPLIILKGNLAPEGAVAKVSGVKVRNITGPAKVFDSEEDAIEAVLSDEIVDGDVVVVRFVGPKGGPGMPEMLSLSSMIVGKGQGDKVALLTDGRFSGGTYGLVVGHIAPEAQVGGPIAYLRTGDMVTVDQDTKEITMHVPDEELAKRKAETELPPLYSRGVLGKYAHIVSSASRGAVTDFWNMDKSGKA</sequence>
<reference key="1">
    <citation type="journal article" date="2004" name="Nat. Biotechnol.">
        <title>Complete sequence and comparative genome analysis of the dairy bacterium Streptococcus thermophilus.</title>
        <authorList>
            <person name="Bolotin A."/>
            <person name="Quinquis B."/>
            <person name="Renault P."/>
            <person name="Sorokin A."/>
            <person name="Ehrlich S.D."/>
            <person name="Kulakauskas S."/>
            <person name="Lapidus A."/>
            <person name="Goltsman E."/>
            <person name="Mazur M."/>
            <person name="Pusch G.D."/>
            <person name="Fonstein M."/>
            <person name="Overbeek R."/>
            <person name="Kyprides N."/>
            <person name="Purnelle B."/>
            <person name="Prozzi D."/>
            <person name="Ngui K."/>
            <person name="Masuy D."/>
            <person name="Hancy F."/>
            <person name="Burteau S."/>
            <person name="Boutry M."/>
            <person name="Delcour J."/>
            <person name="Goffeau A."/>
            <person name="Hols P."/>
        </authorList>
    </citation>
    <scope>NUCLEOTIDE SEQUENCE [LARGE SCALE GENOMIC DNA]</scope>
    <source>
        <strain>ATCC BAA-250 / LMG 18311</strain>
    </source>
</reference>
<evidence type="ECO:0000255" key="1">
    <source>
        <dbReference type="HAMAP-Rule" id="MF_00012"/>
    </source>
</evidence>
<gene>
    <name evidence="1" type="primary">ilvD</name>
    <name type="ordered locus">stu1604</name>
</gene>
<comment type="function">
    <text evidence="1">Functions in the biosynthesis of branched-chain amino acids. Catalyzes the dehydration of (2R,3R)-2,3-dihydroxy-3-methylpentanoate (2,3-dihydroxy-3-methylvalerate) into 2-oxo-3-methylpentanoate (2-oxo-3-methylvalerate) and of (2R)-2,3-dihydroxy-3-methylbutanoate (2,3-dihydroxyisovalerate) into 2-oxo-3-methylbutanoate (2-oxoisovalerate), the penultimate precursor to L-isoleucine and L-valine, respectively.</text>
</comment>
<comment type="catalytic activity">
    <reaction evidence="1">
        <text>(2R)-2,3-dihydroxy-3-methylbutanoate = 3-methyl-2-oxobutanoate + H2O</text>
        <dbReference type="Rhea" id="RHEA:24809"/>
        <dbReference type="ChEBI" id="CHEBI:11851"/>
        <dbReference type="ChEBI" id="CHEBI:15377"/>
        <dbReference type="ChEBI" id="CHEBI:49072"/>
        <dbReference type="EC" id="4.2.1.9"/>
    </reaction>
    <physiologicalReaction direction="left-to-right" evidence="1">
        <dbReference type="Rhea" id="RHEA:24810"/>
    </physiologicalReaction>
</comment>
<comment type="catalytic activity">
    <reaction evidence="1">
        <text>(2R,3R)-2,3-dihydroxy-3-methylpentanoate = (S)-3-methyl-2-oxopentanoate + H2O</text>
        <dbReference type="Rhea" id="RHEA:27694"/>
        <dbReference type="ChEBI" id="CHEBI:15377"/>
        <dbReference type="ChEBI" id="CHEBI:35146"/>
        <dbReference type="ChEBI" id="CHEBI:49258"/>
        <dbReference type="EC" id="4.2.1.9"/>
    </reaction>
    <physiologicalReaction direction="left-to-right" evidence="1">
        <dbReference type="Rhea" id="RHEA:27695"/>
    </physiologicalReaction>
</comment>
<comment type="cofactor">
    <cofactor evidence="1">
        <name>[2Fe-2S] cluster</name>
        <dbReference type="ChEBI" id="CHEBI:190135"/>
    </cofactor>
    <text evidence="1">Binds 1 [2Fe-2S] cluster per subunit. This cluster acts as a Lewis acid cofactor.</text>
</comment>
<comment type="cofactor">
    <cofactor evidence="1">
        <name>Mg(2+)</name>
        <dbReference type="ChEBI" id="CHEBI:18420"/>
    </cofactor>
</comment>
<comment type="pathway">
    <text evidence="1">Amino-acid biosynthesis; L-isoleucine biosynthesis; L-isoleucine from 2-oxobutanoate: step 3/4.</text>
</comment>
<comment type="pathway">
    <text evidence="1">Amino-acid biosynthesis; L-valine biosynthesis; L-valine from pyruvate: step 3/4.</text>
</comment>
<comment type="subunit">
    <text evidence="1">Homodimer.</text>
</comment>
<comment type="similarity">
    <text evidence="1">Belongs to the IlvD/Edd family.</text>
</comment>